<proteinExistence type="inferred from homology"/>
<sequence>MTTTIRSGRLSGWESFCNWVTSTNNRIYVGWFGVLMVPTLLAAAICFTIAFIAAPPVDIDGIREPVAGSFLYGNNIISGAVVPSSNAIGLHFYPIWEAASVDEWLYNGGPYQLVVFHFLIGICCWLGRQWELSYRLGMRPWICVAYSAPLSAAFAVFLIYPVGQGSFSDGMPLGISGTFNFMLVFQAEHNILMHPFHMIGVAGMFGGSLFSAMHGSLVTSSLIRETTETESQNYGYKFGQEEETYNIVAAHGYFGRLIFQYASFNNSRSLHFFLAAWPVICIWITSLGISTMAFNLNGFNFNQSVLDAQGRVVPTWADVLNRSNLGMEVMHERNAHNFPLDLAAAESTPVALIAPAIG</sequence>
<comment type="function">
    <text evidence="1">Photosystem II (PSII) is a light-driven water:plastoquinone oxidoreductase that uses light energy to abstract electrons from H(2)O, generating O(2) and a proton gradient subsequently used for ATP formation. It consists of a core antenna complex that captures photons, and an electron transfer chain that converts photonic excitation into a charge separation. The D1/D2 (PsbA/PsbD) reaction center heterodimer binds P680, the primary electron donor of PSII as well as several subsequent electron acceptors.</text>
</comment>
<comment type="catalytic activity">
    <reaction evidence="1">
        <text>2 a plastoquinone + 4 hnu + 2 H2O = 2 a plastoquinol + O2</text>
        <dbReference type="Rhea" id="RHEA:36359"/>
        <dbReference type="Rhea" id="RHEA-COMP:9561"/>
        <dbReference type="Rhea" id="RHEA-COMP:9562"/>
        <dbReference type="ChEBI" id="CHEBI:15377"/>
        <dbReference type="ChEBI" id="CHEBI:15379"/>
        <dbReference type="ChEBI" id="CHEBI:17757"/>
        <dbReference type="ChEBI" id="CHEBI:30212"/>
        <dbReference type="ChEBI" id="CHEBI:62192"/>
        <dbReference type="EC" id="1.10.3.9"/>
    </reaction>
</comment>
<comment type="cofactor">
    <text evidence="1">The D1/D2 heterodimer binds P680, chlorophylls that are the primary electron donor of PSII, and subsequent electron acceptors. It shares a non-heme iron and each subunit binds pheophytin, quinone, additional chlorophylls, carotenoids and lipids. D1 provides most of the ligands for the Mn4-Ca-O5 cluster of the oxygen-evolving complex (OEC). There is also a Cl(-1) ion associated with D1 and D2, which is required for oxygen evolution. The PSII complex binds additional chlorophylls, carotenoids and specific lipids.</text>
</comment>
<comment type="subunit">
    <text evidence="2">PSII is composed of 1 copy each of membrane proteins PsbA, PsbB, PsbC, PsbD, PsbE, PsbF, PsbH, PsbI, PsbJ, PsbK, PsbL, PsbM, PsbT, PsbX, PsbY, Psb30/Ycf12, peripheral proteins PsbO, CyanoQ (PsbQ), PsbU, PsbV and a large number of cofactors. It forms dimeric complexes.</text>
</comment>
<comment type="subcellular location">
    <subcellularLocation>
        <location evidence="1">Cellular thylakoid membrane</location>
        <topology evidence="1">Multi-pass membrane protein</topology>
    </subcellularLocation>
</comment>
<comment type="PTM">
    <text evidence="1">Tyr-160 forms a radical intermediate that is referred to as redox-active TyrZ, YZ or Y-Z.</text>
</comment>
<comment type="PTM">
    <text evidence="1">C-terminally processed by CtpA; processing is essential to allow assembly of the oxygen-evolving complex and thus photosynthetic growth.</text>
</comment>
<comment type="miscellaneous">
    <text evidence="1">Cyanobacteria usually contain more than 2 copies of the psbA gene.</text>
</comment>
<comment type="miscellaneous">
    <text evidence="1">2 of the reaction center chlorophylls (ChlD1 and ChlD2) are entirely coordinated by water.</text>
</comment>
<comment type="miscellaneous">
    <text evidence="1">Herbicides such as atrazine, BNT, diuron or ioxynil bind in the Q(B) binding site and block subsequent electron transfer.</text>
</comment>
<comment type="similarity">
    <text evidence="1">Belongs to the reaction center PufL/M/PsbA/D family.</text>
</comment>
<dbReference type="EC" id="1.10.3.9" evidence="1"/>
<dbReference type="EMBL" id="BX548175">
    <property type="protein sequence ID" value="CAE20594.1"/>
    <property type="molecule type" value="Genomic_DNA"/>
</dbReference>
<dbReference type="EMBL" id="BX548175">
    <property type="protein sequence ID" value="CAE21707.1"/>
    <property type="molecule type" value="Genomic_DNA"/>
</dbReference>
<dbReference type="SMR" id="Q7TTH6"/>
<dbReference type="KEGG" id="pmt:PMT_0419"/>
<dbReference type="KEGG" id="pmt:PMT_1532"/>
<dbReference type="eggNOG" id="ENOG502Z87P">
    <property type="taxonomic scope" value="Bacteria"/>
</dbReference>
<dbReference type="HOGENOM" id="CLU_054206_1_0_3"/>
<dbReference type="OrthoDB" id="505356at2"/>
<dbReference type="Proteomes" id="UP000001423">
    <property type="component" value="Chromosome"/>
</dbReference>
<dbReference type="GO" id="GO:0009523">
    <property type="term" value="C:photosystem II"/>
    <property type="evidence" value="ECO:0007669"/>
    <property type="project" value="UniProtKB-KW"/>
</dbReference>
<dbReference type="GO" id="GO:0031676">
    <property type="term" value="C:plasma membrane-derived thylakoid membrane"/>
    <property type="evidence" value="ECO:0007669"/>
    <property type="project" value="UniProtKB-SubCell"/>
</dbReference>
<dbReference type="GO" id="GO:0016168">
    <property type="term" value="F:chlorophyll binding"/>
    <property type="evidence" value="ECO:0007669"/>
    <property type="project" value="UniProtKB-UniRule"/>
</dbReference>
<dbReference type="GO" id="GO:0045156">
    <property type="term" value="F:electron transporter, transferring electrons within the cyclic electron transport pathway of photosynthesis activity"/>
    <property type="evidence" value="ECO:0007669"/>
    <property type="project" value="InterPro"/>
</dbReference>
<dbReference type="GO" id="GO:0005506">
    <property type="term" value="F:iron ion binding"/>
    <property type="evidence" value="ECO:0007669"/>
    <property type="project" value="UniProtKB-UniRule"/>
</dbReference>
<dbReference type="GO" id="GO:0016682">
    <property type="term" value="F:oxidoreductase activity, acting on diphenols and related substances as donors, oxygen as acceptor"/>
    <property type="evidence" value="ECO:0007669"/>
    <property type="project" value="UniProtKB-UniRule"/>
</dbReference>
<dbReference type="GO" id="GO:0010242">
    <property type="term" value="F:oxygen evolving activity"/>
    <property type="evidence" value="ECO:0007669"/>
    <property type="project" value="UniProtKB-EC"/>
</dbReference>
<dbReference type="GO" id="GO:0009772">
    <property type="term" value="P:photosynthetic electron transport in photosystem II"/>
    <property type="evidence" value="ECO:0007669"/>
    <property type="project" value="InterPro"/>
</dbReference>
<dbReference type="GO" id="GO:0009635">
    <property type="term" value="P:response to herbicide"/>
    <property type="evidence" value="ECO:0007669"/>
    <property type="project" value="UniProtKB-KW"/>
</dbReference>
<dbReference type="CDD" id="cd09289">
    <property type="entry name" value="Photosystem-II_D1"/>
    <property type="match status" value="1"/>
</dbReference>
<dbReference type="FunFam" id="1.20.85.10:FF:000002">
    <property type="entry name" value="Photosystem II protein D1"/>
    <property type="match status" value="1"/>
</dbReference>
<dbReference type="Gene3D" id="1.20.85.10">
    <property type="entry name" value="Photosystem II protein D1-like"/>
    <property type="match status" value="2"/>
</dbReference>
<dbReference type="HAMAP" id="MF_01379">
    <property type="entry name" value="PSII_PsbA_D1"/>
    <property type="match status" value="1"/>
</dbReference>
<dbReference type="InterPro" id="IPR055266">
    <property type="entry name" value="D1/D2"/>
</dbReference>
<dbReference type="InterPro" id="IPR036854">
    <property type="entry name" value="Photo_II_D1/D2_sf"/>
</dbReference>
<dbReference type="InterPro" id="IPR000484">
    <property type="entry name" value="Photo_RC_L/M"/>
</dbReference>
<dbReference type="InterPro" id="IPR055265">
    <property type="entry name" value="Photo_RC_L/M_CS"/>
</dbReference>
<dbReference type="InterPro" id="IPR005867">
    <property type="entry name" value="PSII_D1"/>
</dbReference>
<dbReference type="NCBIfam" id="TIGR01151">
    <property type="entry name" value="psbA"/>
    <property type="match status" value="1"/>
</dbReference>
<dbReference type="PANTHER" id="PTHR33149:SF12">
    <property type="entry name" value="PHOTOSYSTEM II D2 PROTEIN"/>
    <property type="match status" value="1"/>
</dbReference>
<dbReference type="PANTHER" id="PTHR33149">
    <property type="entry name" value="PHOTOSYSTEM II PROTEIN D1"/>
    <property type="match status" value="1"/>
</dbReference>
<dbReference type="Pfam" id="PF00124">
    <property type="entry name" value="Photo_RC"/>
    <property type="match status" value="1"/>
</dbReference>
<dbReference type="PRINTS" id="PR00256">
    <property type="entry name" value="REACTNCENTRE"/>
</dbReference>
<dbReference type="SUPFAM" id="SSF81483">
    <property type="entry name" value="Bacterial photosystem II reaction centre, L and M subunits"/>
    <property type="match status" value="1"/>
</dbReference>
<dbReference type="PROSITE" id="PS00244">
    <property type="entry name" value="REACTION_CENTER"/>
    <property type="match status" value="1"/>
</dbReference>
<organism>
    <name type="scientific">Prochlorococcus marinus (strain MIT 9313)</name>
    <dbReference type="NCBI Taxonomy" id="74547"/>
    <lineage>
        <taxon>Bacteria</taxon>
        <taxon>Bacillati</taxon>
        <taxon>Cyanobacteriota</taxon>
        <taxon>Cyanophyceae</taxon>
        <taxon>Synechococcales</taxon>
        <taxon>Prochlorococcaceae</taxon>
        <taxon>Prochlorococcus</taxon>
    </lineage>
</organism>
<keyword id="KW-0106">Calcium</keyword>
<keyword id="KW-0148">Chlorophyll</keyword>
<keyword id="KW-0157">Chromophore</keyword>
<keyword id="KW-0249">Electron transport</keyword>
<keyword id="KW-0359">Herbicide resistance</keyword>
<keyword id="KW-0408">Iron</keyword>
<keyword id="KW-0460">Magnesium</keyword>
<keyword id="KW-0464">Manganese</keyword>
<keyword id="KW-0472">Membrane</keyword>
<keyword id="KW-0479">Metal-binding</keyword>
<keyword id="KW-0560">Oxidoreductase</keyword>
<keyword id="KW-0602">Photosynthesis</keyword>
<keyword id="KW-0604">Photosystem II</keyword>
<keyword id="KW-1185">Reference proteome</keyword>
<keyword id="KW-0793">Thylakoid</keyword>
<keyword id="KW-0812">Transmembrane</keyword>
<keyword id="KW-1133">Transmembrane helix</keyword>
<keyword id="KW-0813">Transport</keyword>
<reference key="1">
    <citation type="journal article" date="2003" name="Nature">
        <title>Genome divergence in two Prochlorococcus ecotypes reflects oceanic niche differentiation.</title>
        <authorList>
            <person name="Rocap G."/>
            <person name="Larimer F.W."/>
            <person name="Lamerdin J.E."/>
            <person name="Malfatti S."/>
            <person name="Chain P."/>
            <person name="Ahlgren N.A."/>
            <person name="Arellano A."/>
            <person name="Coleman M."/>
            <person name="Hauser L."/>
            <person name="Hess W.R."/>
            <person name="Johnson Z.I."/>
            <person name="Land M.L."/>
            <person name="Lindell D."/>
            <person name="Post A.F."/>
            <person name="Regala W."/>
            <person name="Shah M."/>
            <person name="Shaw S.L."/>
            <person name="Steglich C."/>
            <person name="Sullivan M.B."/>
            <person name="Ting C.S."/>
            <person name="Tolonen A."/>
            <person name="Webb E.A."/>
            <person name="Zinser E.R."/>
            <person name="Chisholm S.W."/>
        </authorList>
    </citation>
    <scope>NUCLEOTIDE SEQUENCE [LARGE SCALE GENOMIC DNA]</scope>
    <source>
        <strain>MIT 9313</strain>
    </source>
</reference>
<name>PSBA_PROMM</name>
<protein>
    <recommendedName>
        <fullName evidence="1">Photosystem II protein D1</fullName>
        <shortName evidence="1">PSII D1 protein</shortName>
        <ecNumber evidence="1">1.10.3.9</ecNumber>
    </recommendedName>
    <alternativeName>
        <fullName evidence="1">Photosystem II Q(B) protein</fullName>
    </alternativeName>
</protein>
<evidence type="ECO:0000255" key="1">
    <source>
        <dbReference type="HAMAP-Rule" id="MF_01379"/>
    </source>
</evidence>
<evidence type="ECO:0000305" key="2"/>
<accession>Q7TTH6</accession>
<feature type="chain" id="PRO_0000316363" description="Photosystem II protein D1" evidence="1">
    <location>
        <begin position="1"/>
        <end position="343"/>
    </location>
</feature>
<feature type="propeptide" id="PRO_0000316364" evidence="1">
    <location>
        <begin position="344"/>
        <end position="358"/>
    </location>
</feature>
<feature type="transmembrane region" description="Helical" evidence="1">
    <location>
        <begin position="28"/>
        <end position="45"/>
    </location>
</feature>
<feature type="transmembrane region" description="Helical" evidence="1">
    <location>
        <begin position="117"/>
        <end position="132"/>
    </location>
</feature>
<feature type="transmembrane region" description="Helical" evidence="1">
    <location>
        <begin position="141"/>
        <end position="155"/>
    </location>
</feature>
<feature type="transmembrane region" description="Helical" evidence="1">
    <location>
        <begin position="196"/>
        <end position="217"/>
    </location>
</feature>
<feature type="transmembrane region" description="Helical" evidence="1">
    <location>
        <begin position="273"/>
        <end position="287"/>
    </location>
</feature>
<feature type="binding site" description="axial binding residue" evidence="1">
    <location>
        <position position="117"/>
    </location>
    <ligand>
        <name>chlorophyll a</name>
        <dbReference type="ChEBI" id="CHEBI:58416"/>
        <label>ChlzD1</label>
    </ligand>
    <ligandPart>
        <name>Mg</name>
        <dbReference type="ChEBI" id="CHEBI:25107"/>
    </ligandPart>
</feature>
<feature type="binding site" evidence="1">
    <location>
        <position position="125"/>
    </location>
    <ligand>
        <name>pheophytin a</name>
        <dbReference type="ChEBI" id="CHEBI:136840"/>
        <label>D1</label>
    </ligand>
</feature>
<feature type="binding site" evidence="1">
    <location>
        <position position="169"/>
    </location>
    <ligand>
        <name>[CaMn4O5] cluster</name>
        <dbReference type="ChEBI" id="CHEBI:189552"/>
    </ligand>
</feature>
<feature type="binding site" evidence="1">
    <location>
        <position position="188"/>
    </location>
    <ligand>
        <name>[CaMn4O5] cluster</name>
        <dbReference type="ChEBI" id="CHEBI:189552"/>
    </ligand>
</feature>
<feature type="binding site" description="axial binding residue" evidence="1">
    <location>
        <position position="197"/>
    </location>
    <ligand>
        <name>chlorophyll a</name>
        <dbReference type="ChEBI" id="CHEBI:58416"/>
        <label>PD1</label>
    </ligand>
    <ligandPart>
        <name>Mg</name>
        <dbReference type="ChEBI" id="CHEBI:25107"/>
    </ligandPart>
</feature>
<feature type="binding site" evidence="1">
    <location>
        <position position="214"/>
    </location>
    <ligand>
        <name>a quinone</name>
        <dbReference type="ChEBI" id="CHEBI:132124"/>
        <label>B</label>
    </ligand>
</feature>
<feature type="binding site" evidence="1">
    <location>
        <position position="214"/>
    </location>
    <ligand>
        <name>Fe cation</name>
        <dbReference type="ChEBI" id="CHEBI:24875"/>
        <note>ligand shared with heterodimeric partner</note>
    </ligand>
</feature>
<feature type="binding site" evidence="1">
    <location>
        <begin position="263"/>
        <end position="264"/>
    </location>
    <ligand>
        <name>a quinone</name>
        <dbReference type="ChEBI" id="CHEBI:132124"/>
        <label>B</label>
    </ligand>
</feature>
<feature type="binding site" evidence="1">
    <location>
        <position position="271"/>
    </location>
    <ligand>
        <name>Fe cation</name>
        <dbReference type="ChEBI" id="CHEBI:24875"/>
        <note>ligand shared with heterodimeric partner</note>
    </ligand>
</feature>
<feature type="binding site" evidence="1">
    <location>
        <position position="331"/>
    </location>
    <ligand>
        <name>[CaMn4O5] cluster</name>
        <dbReference type="ChEBI" id="CHEBI:189552"/>
    </ligand>
</feature>
<feature type="binding site" evidence="1">
    <location>
        <position position="332"/>
    </location>
    <ligand>
        <name>[CaMn4O5] cluster</name>
        <dbReference type="ChEBI" id="CHEBI:189552"/>
    </ligand>
</feature>
<feature type="binding site" evidence="1">
    <location>
        <position position="341"/>
    </location>
    <ligand>
        <name>[CaMn4O5] cluster</name>
        <dbReference type="ChEBI" id="CHEBI:189552"/>
    </ligand>
</feature>
<feature type="binding site" evidence="1">
    <location>
        <position position="343"/>
    </location>
    <ligand>
        <name>[CaMn4O5] cluster</name>
        <dbReference type="ChEBI" id="CHEBI:189552"/>
    </ligand>
</feature>
<feature type="site" description="Tyrosine radical intermediate" evidence="1">
    <location>
        <position position="160"/>
    </location>
</feature>
<feature type="site" description="Stabilizes free radical intermediate" evidence="1">
    <location>
        <position position="189"/>
    </location>
</feature>
<feature type="site" description="Cleavage; by CtpA" evidence="1">
    <location>
        <begin position="343"/>
        <end position="344"/>
    </location>
</feature>
<gene>
    <name evidence="1 2" type="primary">psbA1</name>
    <name type="ordered locus">PMT_0419</name>
</gene>
<gene>
    <name evidence="1 2" type="primary">psbA2</name>
    <name type="ordered locus">PMT_1532</name>
</gene>